<keyword id="KW-1003">Cell membrane</keyword>
<keyword id="KW-1015">Disulfide bond</keyword>
<keyword id="KW-0297">G-protein coupled receptor</keyword>
<keyword id="KW-0325">Glycoprotein</keyword>
<keyword id="KW-0472">Membrane</keyword>
<keyword id="KW-0552">Olfaction</keyword>
<keyword id="KW-0675">Receptor</keyword>
<keyword id="KW-1185">Reference proteome</keyword>
<keyword id="KW-0716">Sensory transduction</keyword>
<keyword id="KW-0807">Transducer</keyword>
<keyword id="KW-0812">Transmembrane</keyword>
<keyword id="KW-1133">Transmembrane helix</keyword>
<accession>O60403</accession>
<accession>Q6IFQ1</accession>
<accession>Q96R58</accession>
<protein>
    <recommendedName>
        <fullName>Olfactory receptor 10H2</fullName>
    </recommendedName>
    <alternativeName>
        <fullName>Olfactory receptor OR19-23</fullName>
    </alternativeName>
</protein>
<comment type="function">
    <text evidence="4">Odorant receptor.</text>
</comment>
<comment type="subcellular location">
    <subcellularLocation>
        <location>Cell membrane</location>
        <topology>Multi-pass membrane protein</topology>
    </subcellularLocation>
</comment>
<comment type="similarity">
    <text evidence="2">Belongs to the G-protein coupled receptor 1 family.</text>
</comment>
<comment type="online information" name="Human Olfactory Receptor Data Exploratorium (HORDE)">
    <link uri="https://genome.weizmann.ac.il/horde/card/index/symbol:OR10H2/term:OR10H2/type:keyword"/>
</comment>
<organism>
    <name type="scientific">Homo sapiens</name>
    <name type="common">Human</name>
    <dbReference type="NCBI Taxonomy" id="9606"/>
    <lineage>
        <taxon>Eukaryota</taxon>
        <taxon>Metazoa</taxon>
        <taxon>Chordata</taxon>
        <taxon>Craniata</taxon>
        <taxon>Vertebrata</taxon>
        <taxon>Euteleostomi</taxon>
        <taxon>Mammalia</taxon>
        <taxon>Eutheria</taxon>
        <taxon>Euarchontoglires</taxon>
        <taxon>Primates</taxon>
        <taxon>Haplorrhini</taxon>
        <taxon>Catarrhini</taxon>
        <taxon>Hominidae</taxon>
        <taxon>Homo</taxon>
    </lineage>
</organism>
<feature type="chain" id="PRO_0000150703" description="Olfactory receptor 10H2">
    <location>
        <begin position="1"/>
        <end position="315"/>
    </location>
</feature>
<feature type="topological domain" description="Extracellular" evidence="1">
    <location>
        <begin position="1"/>
        <end position="25"/>
    </location>
</feature>
<feature type="transmembrane region" description="Helical; Name=1" evidence="1">
    <location>
        <begin position="26"/>
        <end position="46"/>
    </location>
</feature>
<feature type="topological domain" description="Cytoplasmic" evidence="1">
    <location>
        <begin position="47"/>
        <end position="54"/>
    </location>
</feature>
<feature type="transmembrane region" description="Helical; Name=2" evidence="1">
    <location>
        <begin position="55"/>
        <end position="75"/>
    </location>
</feature>
<feature type="topological domain" description="Extracellular" evidence="1">
    <location>
        <begin position="76"/>
        <end position="99"/>
    </location>
</feature>
<feature type="transmembrane region" description="Helical; Name=3" evidence="1">
    <location>
        <begin position="100"/>
        <end position="120"/>
    </location>
</feature>
<feature type="topological domain" description="Cytoplasmic" evidence="1">
    <location>
        <begin position="121"/>
        <end position="139"/>
    </location>
</feature>
<feature type="transmembrane region" description="Helical; Name=4" evidence="1">
    <location>
        <begin position="140"/>
        <end position="160"/>
    </location>
</feature>
<feature type="topological domain" description="Extracellular" evidence="1">
    <location>
        <begin position="161"/>
        <end position="197"/>
    </location>
</feature>
<feature type="transmembrane region" description="Helical; Name=5" evidence="1">
    <location>
        <begin position="198"/>
        <end position="218"/>
    </location>
</feature>
<feature type="topological domain" description="Cytoplasmic" evidence="1">
    <location>
        <begin position="219"/>
        <end position="238"/>
    </location>
</feature>
<feature type="transmembrane region" description="Helical; Name=6" evidence="1">
    <location>
        <begin position="239"/>
        <end position="259"/>
    </location>
</feature>
<feature type="topological domain" description="Extracellular" evidence="1">
    <location>
        <begin position="260"/>
        <end position="272"/>
    </location>
</feature>
<feature type="transmembrane region" description="Helical; Name=7" evidence="1">
    <location>
        <begin position="273"/>
        <end position="293"/>
    </location>
</feature>
<feature type="topological domain" description="Cytoplasmic" evidence="1">
    <location>
        <begin position="294"/>
        <end position="315"/>
    </location>
</feature>
<feature type="glycosylation site" description="N-linked (GlcNAc...) asparagine" evidence="1">
    <location>
        <position position="5"/>
    </location>
</feature>
<feature type="disulfide bond" evidence="2">
    <location>
        <begin position="97"/>
        <end position="189"/>
    </location>
</feature>
<feature type="sequence variant" id="VAR_062062" description="In dbSNP:rs4569397.">
    <original>L</original>
    <variation>Q</variation>
    <location>
        <position position="40"/>
    </location>
</feature>
<feature type="sequence variant" id="VAR_077833" description="Found in a child with sporadic epilepsy; uncertain significance; dbSNP:rs756001079." evidence="3">
    <original>R</original>
    <variation>H</variation>
    <location>
        <position position="131"/>
    </location>
</feature>
<feature type="sequence variant" id="VAR_022049" description="In dbSNP:rs1806931.">
    <original>S</original>
    <variation>F</variation>
    <location>
        <position position="171"/>
    </location>
</feature>
<reference key="1">
    <citation type="journal article" date="2004" name="Nature">
        <title>The DNA sequence and biology of human chromosome 19.</title>
        <authorList>
            <person name="Grimwood J."/>
            <person name="Gordon L.A."/>
            <person name="Olsen A.S."/>
            <person name="Terry A."/>
            <person name="Schmutz J."/>
            <person name="Lamerdin J.E."/>
            <person name="Hellsten U."/>
            <person name="Goodstein D."/>
            <person name="Couronne O."/>
            <person name="Tran-Gyamfi M."/>
            <person name="Aerts A."/>
            <person name="Altherr M."/>
            <person name="Ashworth L."/>
            <person name="Bajorek E."/>
            <person name="Black S."/>
            <person name="Branscomb E."/>
            <person name="Caenepeel S."/>
            <person name="Carrano A.V."/>
            <person name="Caoile C."/>
            <person name="Chan Y.M."/>
            <person name="Christensen M."/>
            <person name="Cleland C.A."/>
            <person name="Copeland A."/>
            <person name="Dalin E."/>
            <person name="Dehal P."/>
            <person name="Denys M."/>
            <person name="Detter J.C."/>
            <person name="Escobar J."/>
            <person name="Flowers D."/>
            <person name="Fotopulos D."/>
            <person name="Garcia C."/>
            <person name="Georgescu A.M."/>
            <person name="Glavina T."/>
            <person name="Gomez M."/>
            <person name="Gonzales E."/>
            <person name="Groza M."/>
            <person name="Hammon N."/>
            <person name="Hawkins T."/>
            <person name="Haydu L."/>
            <person name="Ho I."/>
            <person name="Huang W."/>
            <person name="Israni S."/>
            <person name="Jett J."/>
            <person name="Kadner K."/>
            <person name="Kimball H."/>
            <person name="Kobayashi A."/>
            <person name="Larionov V."/>
            <person name="Leem S.-H."/>
            <person name="Lopez F."/>
            <person name="Lou Y."/>
            <person name="Lowry S."/>
            <person name="Malfatti S."/>
            <person name="Martinez D."/>
            <person name="McCready P.M."/>
            <person name="Medina C."/>
            <person name="Morgan J."/>
            <person name="Nelson K."/>
            <person name="Nolan M."/>
            <person name="Ovcharenko I."/>
            <person name="Pitluck S."/>
            <person name="Pollard M."/>
            <person name="Popkie A.P."/>
            <person name="Predki P."/>
            <person name="Quan G."/>
            <person name="Ramirez L."/>
            <person name="Rash S."/>
            <person name="Retterer J."/>
            <person name="Rodriguez A."/>
            <person name="Rogers S."/>
            <person name="Salamov A."/>
            <person name="Salazar A."/>
            <person name="She X."/>
            <person name="Smith D."/>
            <person name="Slezak T."/>
            <person name="Solovyev V."/>
            <person name="Thayer N."/>
            <person name="Tice H."/>
            <person name="Tsai M."/>
            <person name="Ustaszewska A."/>
            <person name="Vo N."/>
            <person name="Wagner M."/>
            <person name="Wheeler J."/>
            <person name="Wu K."/>
            <person name="Xie G."/>
            <person name="Yang J."/>
            <person name="Dubchak I."/>
            <person name="Furey T.S."/>
            <person name="DeJong P."/>
            <person name="Dickson M."/>
            <person name="Gordon D."/>
            <person name="Eichler E.E."/>
            <person name="Pennacchio L.A."/>
            <person name="Richardson P."/>
            <person name="Stubbs L."/>
            <person name="Rokhsar D.S."/>
            <person name="Myers R.M."/>
            <person name="Rubin E.M."/>
            <person name="Lucas S.M."/>
        </authorList>
    </citation>
    <scope>NUCLEOTIDE SEQUENCE [LARGE SCALE GENOMIC DNA]</scope>
</reference>
<reference key="2">
    <citation type="journal article" date="2004" name="Genome Res.">
        <title>The status, quality, and expansion of the NIH full-length cDNA project: the Mammalian Gene Collection (MGC).</title>
        <authorList>
            <consortium name="The MGC Project Team"/>
        </authorList>
    </citation>
    <scope>NUCLEOTIDE SEQUENCE [LARGE SCALE MRNA]</scope>
</reference>
<reference key="3">
    <citation type="journal article" date="2002" name="Genomics">
        <title>DEFOG: a practical scheme for deciphering families of genes.</title>
        <authorList>
            <person name="Fuchs T."/>
            <person name="Malecova B."/>
            <person name="Linhart C."/>
            <person name="Sharan R."/>
            <person name="Khen M."/>
            <person name="Herwig R."/>
            <person name="Shmulevich D."/>
            <person name="Elkon R."/>
            <person name="Steinfath M."/>
            <person name="O'Brien J.K."/>
            <person name="Radelof U."/>
            <person name="Lehrach H."/>
            <person name="Lancet D."/>
            <person name="Shamir R."/>
        </authorList>
    </citation>
    <scope>NUCLEOTIDE SEQUENCE [GENOMIC DNA] OF 68-284</scope>
</reference>
<reference key="4">
    <citation type="journal article" date="2004" name="Proc. Natl. Acad. Sci. U.S.A.">
        <title>The human olfactory receptor gene family.</title>
        <authorList>
            <person name="Malnic B."/>
            <person name="Godfrey P.A."/>
            <person name="Buck L.B."/>
        </authorList>
    </citation>
    <scope>IDENTIFICATION</scope>
</reference>
<reference key="5">
    <citation type="journal article" date="2004" name="Proc. Natl. Acad. Sci. U.S.A.">
        <authorList>
            <person name="Malnic B."/>
            <person name="Godfrey P.A."/>
            <person name="Buck L.B."/>
        </authorList>
    </citation>
    <scope>ERRATUM OF PUBMED:14983052</scope>
</reference>
<reference key="6">
    <citation type="journal article" date="2013" name="Epilepsia">
        <title>Exome sequencing reveals new causal mutations in children with epileptic encephalopathies.</title>
        <authorList>
            <person name="Veeramah K.R."/>
            <person name="Johnstone L."/>
            <person name="Karafet T.M."/>
            <person name="Wolf D."/>
            <person name="Sprissler R."/>
            <person name="Salogiannis J."/>
            <person name="Barth-Maron A."/>
            <person name="Greenberg M.E."/>
            <person name="Stuhlmann T."/>
            <person name="Weinert S."/>
            <person name="Jentsch T.J."/>
            <person name="Pazzi M."/>
            <person name="Restifo L.L."/>
            <person name="Talwar D."/>
            <person name="Erickson R.P."/>
            <person name="Hammer M.F."/>
        </authorList>
    </citation>
    <scope>VARIANT HIS-131</scope>
</reference>
<dbReference type="EMBL" id="AC004597">
    <property type="protein sequence ID" value="AAC14388.1"/>
    <property type="molecule type" value="Genomic_DNA"/>
</dbReference>
<dbReference type="EMBL" id="BC069085">
    <property type="protein sequence ID" value="AAH69085.1"/>
    <property type="molecule type" value="mRNA"/>
</dbReference>
<dbReference type="EMBL" id="BC069457">
    <property type="protein sequence ID" value="AAH69457.1"/>
    <property type="molecule type" value="mRNA"/>
</dbReference>
<dbReference type="EMBL" id="BC112178">
    <property type="protein sequence ID" value="AAI12179.1"/>
    <property type="molecule type" value="mRNA"/>
</dbReference>
<dbReference type="EMBL" id="BC113647">
    <property type="protein sequence ID" value="AAI13648.1"/>
    <property type="molecule type" value="mRNA"/>
</dbReference>
<dbReference type="EMBL" id="AF399585">
    <property type="protein sequence ID" value="AAK95070.1"/>
    <property type="molecule type" value="Genomic_DNA"/>
</dbReference>
<dbReference type="EMBL" id="BK004211">
    <property type="protein sequence ID" value="DAA04609.1"/>
    <property type="molecule type" value="Genomic_DNA"/>
</dbReference>
<dbReference type="CCDS" id="CCDS12333.1"/>
<dbReference type="RefSeq" id="NP_039227.1">
    <property type="nucleotide sequence ID" value="NM_013939.2"/>
</dbReference>
<dbReference type="SMR" id="O60403"/>
<dbReference type="BioGRID" id="117738">
    <property type="interactions" value="72"/>
</dbReference>
<dbReference type="FunCoup" id="O60403">
    <property type="interactions" value="463"/>
</dbReference>
<dbReference type="IntAct" id="O60403">
    <property type="interactions" value="71"/>
</dbReference>
<dbReference type="STRING" id="9606.ENSP00000306095"/>
<dbReference type="GlyCosmos" id="O60403">
    <property type="glycosylation" value="1 site, No reported glycans"/>
</dbReference>
<dbReference type="GlyGen" id="O60403">
    <property type="glycosylation" value="1 site"/>
</dbReference>
<dbReference type="BioMuta" id="OR10H2"/>
<dbReference type="MassIVE" id="O60403"/>
<dbReference type="PaxDb" id="9606-ENSP00000306095"/>
<dbReference type="PeptideAtlas" id="O60403"/>
<dbReference type="Antibodypedia" id="57126">
    <property type="antibodies" value="41 antibodies from 16 providers"/>
</dbReference>
<dbReference type="DNASU" id="26538"/>
<dbReference type="Ensembl" id="ENST00000305899.5">
    <property type="protein sequence ID" value="ENSP00000306095.3"/>
    <property type="gene ID" value="ENSG00000171942.5"/>
</dbReference>
<dbReference type="GeneID" id="26538"/>
<dbReference type="KEGG" id="hsa:26538"/>
<dbReference type="MANE-Select" id="ENST00000305899.5">
    <property type="protein sequence ID" value="ENSP00000306095.3"/>
    <property type="RefSeq nucleotide sequence ID" value="NM_013939.2"/>
    <property type="RefSeq protein sequence ID" value="NP_039227.1"/>
</dbReference>
<dbReference type="UCSC" id="uc002nbm.3">
    <property type="organism name" value="human"/>
</dbReference>
<dbReference type="AGR" id="HGNC:8173"/>
<dbReference type="CTD" id="26538"/>
<dbReference type="GeneCards" id="OR10H2"/>
<dbReference type="HGNC" id="HGNC:8173">
    <property type="gene designation" value="OR10H2"/>
</dbReference>
<dbReference type="HPA" id="ENSG00000171942">
    <property type="expression patterns" value="Not detected"/>
</dbReference>
<dbReference type="neXtProt" id="NX_O60403"/>
<dbReference type="OpenTargets" id="ENSG00000171942"/>
<dbReference type="PharmGKB" id="PA31978"/>
<dbReference type="VEuPathDB" id="HostDB:ENSG00000171942"/>
<dbReference type="eggNOG" id="ENOG502SJHK">
    <property type="taxonomic scope" value="Eukaryota"/>
</dbReference>
<dbReference type="GeneTree" id="ENSGT01120000271905"/>
<dbReference type="HOGENOM" id="CLU_012526_1_0_1"/>
<dbReference type="InParanoid" id="O60403"/>
<dbReference type="OMA" id="FMSPRAC"/>
<dbReference type="OrthoDB" id="9975554at2759"/>
<dbReference type="PAN-GO" id="O60403">
    <property type="GO annotations" value="6 GO annotations based on evolutionary models"/>
</dbReference>
<dbReference type="PhylomeDB" id="O60403"/>
<dbReference type="TreeFam" id="TF337675"/>
<dbReference type="PathwayCommons" id="O60403"/>
<dbReference type="Reactome" id="R-HSA-381753">
    <property type="pathway name" value="Olfactory Signaling Pathway"/>
</dbReference>
<dbReference type="Reactome" id="R-HSA-9752946">
    <property type="pathway name" value="Expression and translocation of olfactory receptors"/>
</dbReference>
<dbReference type="BioGRID-ORCS" id="26538">
    <property type="hits" value="13 hits in 709 CRISPR screens"/>
</dbReference>
<dbReference type="GeneWiki" id="OR10H2"/>
<dbReference type="GenomeRNAi" id="26538"/>
<dbReference type="Pharos" id="O60403">
    <property type="development level" value="Tdark"/>
</dbReference>
<dbReference type="PRO" id="PR:O60403"/>
<dbReference type="Proteomes" id="UP000005640">
    <property type="component" value="Chromosome 19"/>
</dbReference>
<dbReference type="RNAct" id="O60403">
    <property type="molecule type" value="protein"/>
</dbReference>
<dbReference type="ExpressionAtlas" id="O60403">
    <property type="expression patterns" value="baseline and differential"/>
</dbReference>
<dbReference type="GO" id="GO:0005886">
    <property type="term" value="C:plasma membrane"/>
    <property type="evidence" value="ECO:0000318"/>
    <property type="project" value="GO_Central"/>
</dbReference>
<dbReference type="GO" id="GO:0004930">
    <property type="term" value="F:G protein-coupled receptor activity"/>
    <property type="evidence" value="ECO:0007669"/>
    <property type="project" value="UniProtKB-KW"/>
</dbReference>
<dbReference type="GO" id="GO:0004984">
    <property type="term" value="F:olfactory receptor activity"/>
    <property type="evidence" value="ECO:0000318"/>
    <property type="project" value="GO_Central"/>
</dbReference>
<dbReference type="GO" id="GO:0050911">
    <property type="term" value="P:detection of chemical stimulus involved in sensory perception of smell"/>
    <property type="evidence" value="ECO:0000318"/>
    <property type="project" value="GO_Central"/>
</dbReference>
<dbReference type="CDD" id="cd15225">
    <property type="entry name" value="7tmA_OR10A-like"/>
    <property type="match status" value="1"/>
</dbReference>
<dbReference type="FunFam" id="1.20.1070.10:FF:000110">
    <property type="entry name" value="olfactory receptor 10H1-like"/>
    <property type="match status" value="1"/>
</dbReference>
<dbReference type="Gene3D" id="1.20.1070.10">
    <property type="entry name" value="Rhodopsin 7-helix transmembrane proteins"/>
    <property type="match status" value="1"/>
</dbReference>
<dbReference type="InterPro" id="IPR000276">
    <property type="entry name" value="GPCR_Rhodpsn"/>
</dbReference>
<dbReference type="InterPro" id="IPR017452">
    <property type="entry name" value="GPCR_Rhodpsn_7TM"/>
</dbReference>
<dbReference type="InterPro" id="IPR000725">
    <property type="entry name" value="Olfact_rcpt"/>
</dbReference>
<dbReference type="PANTHER" id="PTHR26453">
    <property type="entry name" value="OLFACTORY RECEPTOR"/>
    <property type="match status" value="1"/>
</dbReference>
<dbReference type="Pfam" id="PF13853">
    <property type="entry name" value="7tm_4"/>
    <property type="match status" value="1"/>
</dbReference>
<dbReference type="PRINTS" id="PR00237">
    <property type="entry name" value="GPCRRHODOPSN"/>
</dbReference>
<dbReference type="PRINTS" id="PR00245">
    <property type="entry name" value="OLFACTORYR"/>
</dbReference>
<dbReference type="SUPFAM" id="SSF81321">
    <property type="entry name" value="Family A G protein-coupled receptor-like"/>
    <property type="match status" value="1"/>
</dbReference>
<dbReference type="PROSITE" id="PS50262">
    <property type="entry name" value="G_PROTEIN_RECEP_F1_2"/>
    <property type="match status" value="1"/>
</dbReference>
<gene>
    <name type="primary">OR10H2</name>
</gene>
<proteinExistence type="evidence at transcript level"/>
<evidence type="ECO:0000255" key="1"/>
<evidence type="ECO:0000255" key="2">
    <source>
        <dbReference type="PROSITE-ProRule" id="PRU00521"/>
    </source>
</evidence>
<evidence type="ECO:0000269" key="3">
    <source>
    </source>
</evidence>
<evidence type="ECO:0000305" key="4"/>
<sequence>MLGLNHTSMSEFILVGFSAFPHLQLMLFLLFLLMYLFTLLGNLLIMATVWSERSLHTPMYLFLCVLSVSEILYTVAIIPRMLADLLSTQRSIAFLACASQMFFSFSFGFTHSFLLTVMGYDRYVAICHPLRYNVLMSPRGCACLVGCSWAGGSVMGMVVTSAIFQLTFCGSHEIQHFLCHVPPLLKLACGNNVPAVALGVGLVCIMALLGCFLLILLSYAFIVADILKIPSAEGRNKAFSTCASHLIVVIVHYGFASVIYLKPKGPHSQEGDTLMATTYAVLTPFLSPIIFSLRNKELKVAMKRTFLSTLYSSGT</sequence>
<name>O10H2_HUMAN</name>